<name>YQGF_MARSD</name>
<keyword id="KW-0963">Cytoplasm</keyword>
<keyword id="KW-0378">Hydrolase</keyword>
<keyword id="KW-0540">Nuclease</keyword>
<keyword id="KW-1185">Reference proteome</keyword>
<keyword id="KW-0690">Ribosome biogenesis</keyword>
<protein>
    <recommendedName>
        <fullName evidence="1">Putative pre-16S rRNA nuclease</fullName>
        <ecNumber evidence="1">3.1.-.-</ecNumber>
    </recommendedName>
</protein>
<reference key="1">
    <citation type="submission" date="2009-06" db="EMBL/GenBank/DDBJ databases">
        <title>Complete sequence of Desulfovibrio salexigens DSM 2638.</title>
        <authorList>
            <consortium name="US DOE Joint Genome Institute"/>
            <person name="Lucas S."/>
            <person name="Copeland A."/>
            <person name="Lapidus A."/>
            <person name="Glavina del Rio T."/>
            <person name="Tice H."/>
            <person name="Bruce D."/>
            <person name="Goodwin L."/>
            <person name="Pitluck S."/>
            <person name="Munk A.C."/>
            <person name="Brettin T."/>
            <person name="Detter J.C."/>
            <person name="Han C."/>
            <person name="Tapia R."/>
            <person name="Larimer F."/>
            <person name="Land M."/>
            <person name="Hauser L."/>
            <person name="Kyrpides N."/>
            <person name="Anderson I."/>
            <person name="Wall J.D."/>
            <person name="Arkin A.P."/>
            <person name="Dehal P."/>
            <person name="Chivian D."/>
            <person name="Giles B."/>
            <person name="Hazen T.C."/>
        </authorList>
    </citation>
    <scope>NUCLEOTIDE SEQUENCE [LARGE SCALE GENOMIC DNA]</scope>
    <source>
        <strain>ATCC 14822 / DSM 2638 / NCIMB 8403 / VKM B-1763</strain>
    </source>
</reference>
<sequence>MKVLSIDFGTKRVGLAISDPDQIFAFPYKVMERTTRDAMFSELLEIIENEKVGDIVIGLPLSLDGEDTLTTRQVRNFAASLERRVDLPIHLVDERLSSIAAEDELKEAGLWDRKRKKNLDSQAAKIILETWLARA</sequence>
<gene>
    <name type="ordered locus">Desal_1125</name>
</gene>
<dbReference type="EC" id="3.1.-.-" evidence="1"/>
<dbReference type="EMBL" id="CP001649">
    <property type="protein sequence ID" value="ACS79188.1"/>
    <property type="molecule type" value="Genomic_DNA"/>
</dbReference>
<dbReference type="RefSeq" id="WP_015851007.1">
    <property type="nucleotide sequence ID" value="NC_012881.1"/>
</dbReference>
<dbReference type="SMR" id="C6C125"/>
<dbReference type="STRING" id="526222.Desal_1125"/>
<dbReference type="KEGG" id="dsa:Desal_1125"/>
<dbReference type="eggNOG" id="COG0816">
    <property type="taxonomic scope" value="Bacteria"/>
</dbReference>
<dbReference type="HOGENOM" id="CLU_098240_2_2_7"/>
<dbReference type="OrthoDB" id="9796140at2"/>
<dbReference type="Proteomes" id="UP000002601">
    <property type="component" value="Chromosome"/>
</dbReference>
<dbReference type="GO" id="GO:0005829">
    <property type="term" value="C:cytosol"/>
    <property type="evidence" value="ECO:0007669"/>
    <property type="project" value="TreeGrafter"/>
</dbReference>
<dbReference type="GO" id="GO:0004518">
    <property type="term" value="F:nuclease activity"/>
    <property type="evidence" value="ECO:0007669"/>
    <property type="project" value="UniProtKB-KW"/>
</dbReference>
<dbReference type="GO" id="GO:0000967">
    <property type="term" value="P:rRNA 5'-end processing"/>
    <property type="evidence" value="ECO:0007669"/>
    <property type="project" value="UniProtKB-UniRule"/>
</dbReference>
<dbReference type="CDD" id="cd16964">
    <property type="entry name" value="YqgF"/>
    <property type="match status" value="1"/>
</dbReference>
<dbReference type="Gene3D" id="3.30.420.140">
    <property type="entry name" value="YqgF/RNase H-like domain"/>
    <property type="match status" value="1"/>
</dbReference>
<dbReference type="HAMAP" id="MF_00651">
    <property type="entry name" value="Nuclease_YqgF"/>
    <property type="match status" value="1"/>
</dbReference>
<dbReference type="InterPro" id="IPR012337">
    <property type="entry name" value="RNaseH-like_sf"/>
</dbReference>
<dbReference type="InterPro" id="IPR005227">
    <property type="entry name" value="YqgF"/>
</dbReference>
<dbReference type="InterPro" id="IPR006641">
    <property type="entry name" value="YqgF/RNaseH-like_dom"/>
</dbReference>
<dbReference type="InterPro" id="IPR037027">
    <property type="entry name" value="YqgF/RNaseH-like_dom_sf"/>
</dbReference>
<dbReference type="NCBIfam" id="TIGR00250">
    <property type="entry name" value="RNAse_H_YqgF"/>
    <property type="match status" value="1"/>
</dbReference>
<dbReference type="PANTHER" id="PTHR33317">
    <property type="entry name" value="POLYNUCLEOTIDYL TRANSFERASE, RIBONUCLEASE H-LIKE SUPERFAMILY PROTEIN"/>
    <property type="match status" value="1"/>
</dbReference>
<dbReference type="PANTHER" id="PTHR33317:SF4">
    <property type="entry name" value="POLYNUCLEOTIDYL TRANSFERASE, RIBONUCLEASE H-LIKE SUPERFAMILY PROTEIN"/>
    <property type="match status" value="1"/>
</dbReference>
<dbReference type="Pfam" id="PF03652">
    <property type="entry name" value="RuvX"/>
    <property type="match status" value="1"/>
</dbReference>
<dbReference type="SMART" id="SM00732">
    <property type="entry name" value="YqgFc"/>
    <property type="match status" value="1"/>
</dbReference>
<dbReference type="SUPFAM" id="SSF53098">
    <property type="entry name" value="Ribonuclease H-like"/>
    <property type="match status" value="1"/>
</dbReference>
<organism>
    <name type="scientific">Maridesulfovibrio salexigens (strain ATCC 14822 / DSM 2638 / NCIMB 8403 / VKM B-1763)</name>
    <name type="common">Desulfovibrio salexigens</name>
    <dbReference type="NCBI Taxonomy" id="526222"/>
    <lineage>
        <taxon>Bacteria</taxon>
        <taxon>Pseudomonadati</taxon>
        <taxon>Thermodesulfobacteriota</taxon>
        <taxon>Desulfovibrionia</taxon>
        <taxon>Desulfovibrionales</taxon>
        <taxon>Desulfovibrionaceae</taxon>
        <taxon>Maridesulfovibrio</taxon>
    </lineage>
</organism>
<comment type="function">
    <text evidence="1">Could be a nuclease involved in processing of the 5'-end of pre-16S rRNA.</text>
</comment>
<comment type="subcellular location">
    <subcellularLocation>
        <location evidence="1">Cytoplasm</location>
    </subcellularLocation>
</comment>
<comment type="similarity">
    <text evidence="1">Belongs to the YqgF nuclease family.</text>
</comment>
<proteinExistence type="inferred from homology"/>
<feature type="chain" id="PRO_1000212408" description="Putative pre-16S rRNA nuclease">
    <location>
        <begin position="1"/>
        <end position="135"/>
    </location>
</feature>
<evidence type="ECO:0000255" key="1">
    <source>
        <dbReference type="HAMAP-Rule" id="MF_00651"/>
    </source>
</evidence>
<accession>C6C125</accession>